<protein>
    <recommendedName>
        <fullName evidence="1">Large ribosomal subunit protein uL15</fullName>
    </recommendedName>
    <alternativeName>
        <fullName evidence="3">50S ribosomal protein L15</fullName>
    </alternativeName>
</protein>
<proteinExistence type="inferred from homology"/>
<name>RL15_MYCLE</name>
<gene>
    <name evidence="1" type="primary">rplO</name>
    <name type="ordered locus">ML1840</name>
    <name type="ORF">MLCB2492.23</name>
</gene>
<dbReference type="EMBL" id="Z98756">
    <property type="protein sequence ID" value="CAB11455.1"/>
    <property type="molecule type" value="Genomic_DNA"/>
</dbReference>
<dbReference type="EMBL" id="AL583923">
    <property type="protein sequence ID" value="CAC30794.1"/>
    <property type="molecule type" value="Genomic_DNA"/>
</dbReference>
<dbReference type="PIR" id="T45385">
    <property type="entry name" value="T45385"/>
</dbReference>
<dbReference type="RefSeq" id="NP_302246.1">
    <property type="nucleotide sequence ID" value="NC_002677.1"/>
</dbReference>
<dbReference type="RefSeq" id="WP_010908567.1">
    <property type="nucleotide sequence ID" value="NC_002677.1"/>
</dbReference>
<dbReference type="SMR" id="O33002"/>
<dbReference type="STRING" id="272631.gene:17575688"/>
<dbReference type="KEGG" id="mle:ML1840"/>
<dbReference type="PATRIC" id="fig|272631.5.peg.3490"/>
<dbReference type="Leproma" id="ML1840"/>
<dbReference type="eggNOG" id="COG0200">
    <property type="taxonomic scope" value="Bacteria"/>
</dbReference>
<dbReference type="HOGENOM" id="CLU_055188_4_1_11"/>
<dbReference type="OrthoDB" id="9810293at2"/>
<dbReference type="Proteomes" id="UP000000806">
    <property type="component" value="Chromosome"/>
</dbReference>
<dbReference type="GO" id="GO:0022625">
    <property type="term" value="C:cytosolic large ribosomal subunit"/>
    <property type="evidence" value="ECO:0007669"/>
    <property type="project" value="TreeGrafter"/>
</dbReference>
<dbReference type="GO" id="GO:0019843">
    <property type="term" value="F:rRNA binding"/>
    <property type="evidence" value="ECO:0007669"/>
    <property type="project" value="UniProtKB-UniRule"/>
</dbReference>
<dbReference type="GO" id="GO:0003735">
    <property type="term" value="F:structural constituent of ribosome"/>
    <property type="evidence" value="ECO:0007669"/>
    <property type="project" value="InterPro"/>
</dbReference>
<dbReference type="GO" id="GO:0006412">
    <property type="term" value="P:translation"/>
    <property type="evidence" value="ECO:0007669"/>
    <property type="project" value="UniProtKB-UniRule"/>
</dbReference>
<dbReference type="FunFam" id="3.100.10.10:FF:000005">
    <property type="entry name" value="50S ribosomal protein L15"/>
    <property type="match status" value="1"/>
</dbReference>
<dbReference type="Gene3D" id="3.100.10.10">
    <property type="match status" value="1"/>
</dbReference>
<dbReference type="HAMAP" id="MF_01341">
    <property type="entry name" value="Ribosomal_uL15"/>
    <property type="match status" value="1"/>
</dbReference>
<dbReference type="InterPro" id="IPR030878">
    <property type="entry name" value="Ribosomal_uL15"/>
</dbReference>
<dbReference type="InterPro" id="IPR021131">
    <property type="entry name" value="Ribosomal_uL15/eL18"/>
</dbReference>
<dbReference type="InterPro" id="IPR036227">
    <property type="entry name" value="Ribosomal_uL15/eL18_sf"/>
</dbReference>
<dbReference type="InterPro" id="IPR005749">
    <property type="entry name" value="Ribosomal_uL15_bac-type"/>
</dbReference>
<dbReference type="InterPro" id="IPR001196">
    <property type="entry name" value="Ribosomal_uL15_CS"/>
</dbReference>
<dbReference type="NCBIfam" id="TIGR01071">
    <property type="entry name" value="rplO_bact"/>
    <property type="match status" value="1"/>
</dbReference>
<dbReference type="PANTHER" id="PTHR12934">
    <property type="entry name" value="50S RIBOSOMAL PROTEIN L15"/>
    <property type="match status" value="1"/>
</dbReference>
<dbReference type="PANTHER" id="PTHR12934:SF11">
    <property type="entry name" value="LARGE RIBOSOMAL SUBUNIT PROTEIN UL15M"/>
    <property type="match status" value="1"/>
</dbReference>
<dbReference type="Pfam" id="PF00828">
    <property type="entry name" value="Ribosomal_L27A"/>
    <property type="match status" value="1"/>
</dbReference>
<dbReference type="SUPFAM" id="SSF52080">
    <property type="entry name" value="Ribosomal proteins L15p and L18e"/>
    <property type="match status" value="1"/>
</dbReference>
<dbReference type="PROSITE" id="PS00475">
    <property type="entry name" value="RIBOSOMAL_L15"/>
    <property type="match status" value="1"/>
</dbReference>
<accession>O33002</accession>
<organism>
    <name type="scientific">Mycobacterium leprae (strain TN)</name>
    <dbReference type="NCBI Taxonomy" id="272631"/>
    <lineage>
        <taxon>Bacteria</taxon>
        <taxon>Bacillati</taxon>
        <taxon>Actinomycetota</taxon>
        <taxon>Actinomycetes</taxon>
        <taxon>Mycobacteriales</taxon>
        <taxon>Mycobacteriaceae</taxon>
        <taxon>Mycobacterium</taxon>
    </lineage>
</organism>
<feature type="chain" id="PRO_0000104753" description="Large ribosomal subunit protein uL15">
    <location>
        <begin position="1"/>
        <end position="146"/>
    </location>
</feature>
<feature type="region of interest" description="Disordered" evidence="2">
    <location>
        <begin position="1"/>
        <end position="42"/>
    </location>
</feature>
<reference key="1">
    <citation type="journal article" date="2001" name="Nature">
        <title>Massive gene decay in the leprosy bacillus.</title>
        <authorList>
            <person name="Cole S.T."/>
            <person name="Eiglmeier K."/>
            <person name="Parkhill J."/>
            <person name="James K.D."/>
            <person name="Thomson N.R."/>
            <person name="Wheeler P.R."/>
            <person name="Honore N."/>
            <person name="Garnier T."/>
            <person name="Churcher C.M."/>
            <person name="Harris D.E."/>
            <person name="Mungall K.L."/>
            <person name="Basham D."/>
            <person name="Brown D."/>
            <person name="Chillingworth T."/>
            <person name="Connor R."/>
            <person name="Davies R.M."/>
            <person name="Devlin K."/>
            <person name="Duthoy S."/>
            <person name="Feltwell T."/>
            <person name="Fraser A."/>
            <person name="Hamlin N."/>
            <person name="Holroyd S."/>
            <person name="Hornsby T."/>
            <person name="Jagels K."/>
            <person name="Lacroix C."/>
            <person name="Maclean J."/>
            <person name="Moule S."/>
            <person name="Murphy L.D."/>
            <person name="Oliver K."/>
            <person name="Quail M.A."/>
            <person name="Rajandream M.A."/>
            <person name="Rutherford K.M."/>
            <person name="Rutter S."/>
            <person name="Seeger K."/>
            <person name="Simon S."/>
            <person name="Simmonds M."/>
            <person name="Skelton J."/>
            <person name="Squares R."/>
            <person name="Squares S."/>
            <person name="Stevens K."/>
            <person name="Taylor K."/>
            <person name="Whitehead S."/>
            <person name="Woodward J.R."/>
            <person name="Barrell B.G."/>
        </authorList>
    </citation>
    <scope>NUCLEOTIDE SEQUENCE [LARGE SCALE GENOMIC DNA]</scope>
    <source>
        <strain>TN</strain>
    </source>
</reference>
<sequence length="146" mass="15729">MTIKLHDLQPARGSKTTRTRVGRGEASKGKTAGRGTKGTKARKQVPVTFEGGQMPIHMRLPKLKGFRNRLRTEYAVVNVGDISRLFPEGGTISVNDLVAKKAIRKNSLVKILGDGKLTVKVTLSAHKFSGSARHKITVAGGSVTEL</sequence>
<comment type="function">
    <text evidence="1">Binds to the 23S rRNA.</text>
</comment>
<comment type="subunit">
    <text evidence="1">Part of the 50S ribosomal subunit.</text>
</comment>
<comment type="similarity">
    <text evidence="1">Belongs to the universal ribosomal protein uL15 family.</text>
</comment>
<evidence type="ECO:0000255" key="1">
    <source>
        <dbReference type="HAMAP-Rule" id="MF_01341"/>
    </source>
</evidence>
<evidence type="ECO:0000256" key="2">
    <source>
        <dbReference type="SAM" id="MobiDB-lite"/>
    </source>
</evidence>
<evidence type="ECO:0000305" key="3"/>
<keyword id="KW-1185">Reference proteome</keyword>
<keyword id="KW-0687">Ribonucleoprotein</keyword>
<keyword id="KW-0689">Ribosomal protein</keyword>
<keyword id="KW-0694">RNA-binding</keyword>
<keyword id="KW-0699">rRNA-binding</keyword>